<reference key="1">
    <citation type="journal article" date="2004" name="J. Mol. Microbiol. Biotechnol.">
        <title>The complete genome sequence of Bacillus licheniformis DSM13, an organism with great industrial potential.</title>
        <authorList>
            <person name="Veith B."/>
            <person name="Herzberg C."/>
            <person name="Steckel S."/>
            <person name="Feesche J."/>
            <person name="Maurer K.H."/>
            <person name="Ehrenreich P."/>
            <person name="Baeumer S."/>
            <person name="Henne A."/>
            <person name="Liesegang H."/>
            <person name="Merkl R."/>
            <person name="Ehrenreich A."/>
            <person name="Gottschalk G."/>
        </authorList>
    </citation>
    <scope>NUCLEOTIDE SEQUENCE [LARGE SCALE GENOMIC DNA]</scope>
    <source>
        <strain>ATCC 14580 / DSM 13 / JCM 2505 / CCUG 7422 / NBRC 12200 / NCIMB 9375 / NCTC 10341 / NRRL NRS-1264 / Gibson 46</strain>
    </source>
</reference>
<reference key="2">
    <citation type="journal article" date="2004" name="Genome Biol.">
        <title>Complete genome sequence of the industrial bacterium Bacillus licheniformis and comparisons with closely related Bacillus species.</title>
        <authorList>
            <person name="Rey M.W."/>
            <person name="Ramaiya P."/>
            <person name="Nelson B.A."/>
            <person name="Brody-Karpin S.D."/>
            <person name="Zaretsky E.J."/>
            <person name="Tang M."/>
            <person name="Lopez de Leon A."/>
            <person name="Xiang H."/>
            <person name="Gusti V."/>
            <person name="Clausen I.G."/>
            <person name="Olsen P.B."/>
            <person name="Rasmussen M.D."/>
            <person name="Andersen J.T."/>
            <person name="Joergensen P.L."/>
            <person name="Larsen T.S."/>
            <person name="Sorokin A."/>
            <person name="Bolotin A."/>
            <person name="Lapidus A."/>
            <person name="Galleron N."/>
            <person name="Ehrlich S.D."/>
            <person name="Berka R.M."/>
        </authorList>
    </citation>
    <scope>NUCLEOTIDE SEQUENCE [LARGE SCALE GENOMIC DNA]</scope>
    <source>
        <strain>ATCC 14580 / DSM 13 / JCM 2505 / CCUG 7422 / NBRC 12200 / NCIMB 9375 / NCTC 10341 / NRRL NRS-1264 / Gibson 46</strain>
    </source>
</reference>
<keyword id="KW-0030">Aminoacyl-tRNA synthetase</keyword>
<keyword id="KW-0067">ATP-binding</keyword>
<keyword id="KW-0963">Cytoplasm</keyword>
<keyword id="KW-0436">Ligase</keyword>
<keyword id="KW-0547">Nucleotide-binding</keyword>
<keyword id="KW-0648">Protein biosynthesis</keyword>
<keyword id="KW-1185">Reference proteome</keyword>
<feature type="chain" id="PRO_0000248648" description="Proline--tRNA ligase">
    <location>
        <begin position="1"/>
        <end position="572"/>
    </location>
</feature>
<evidence type="ECO:0000255" key="1">
    <source>
        <dbReference type="HAMAP-Rule" id="MF_01569"/>
    </source>
</evidence>
<gene>
    <name evidence="1" type="primary">proS</name>
    <name type="ordered locus">BLi01878</name>
    <name type="ordered locus">BL01235</name>
</gene>
<accession>Q65JJ1</accession>
<accession>Q62UZ6</accession>
<protein>
    <recommendedName>
        <fullName evidence="1">Proline--tRNA ligase</fullName>
        <ecNumber evidence="1">6.1.1.15</ecNumber>
    </recommendedName>
    <alternativeName>
        <fullName evidence="1">Prolyl-tRNA synthetase</fullName>
        <shortName evidence="1">ProRS</shortName>
    </alternativeName>
</protein>
<sequence length="572" mass="64138">MRQSRTLIPTLREVPADAEAKSHQLLLRAGFIRQNTSGVYSYMPLANKVIHKIQSIVREEMEKINAVEMLMPALQQAETWQESGRWYTYGPELMRLKDRHGREFALGATHEEVITSIVRDEVKSYKRLPLTLYQIQSKFRDEKRPRFGLLRGREFIMKDAYSFHSSAESLDETYNDMYQAYTNVFTRCGLNFRPVIADSGAMGGKDTHEFMALSDVGEDTIAYSDQSSYAANIEMAEVKETDAGEQAEMKELQEVHTPSVKTIEEVAAFLGISPSDCIKSMLMKADGRFVLVLTRGDHEVNDVKVKNLLQAEIIEFASAEEVAEITGTEPGFVGPVGLDREIEIFADFAVKAMANAAAGANKTDYHYQNVNISRDAHNVTFADLRFIQEGDPSPDGKGTIRFAKGIEVGQVFKLGTRYSEAMDATYLDENGRAQPMLMGCYGIGISRTLSAIVEQHHDDKGLIWPLEVTPYDLHILALNMKNDAQVQLAEKLYEEFKANGYDVLFDDRAERAGVKFADSDLIGLPIRITVGKRADEGVVEVKIRKTGESFEIAADELFDFIEKQVKSLSSHS</sequence>
<comment type="function">
    <text evidence="1">Catalyzes the attachment of proline to tRNA(Pro) in a two-step reaction: proline is first activated by ATP to form Pro-AMP and then transferred to the acceptor end of tRNA(Pro). As ProRS can inadvertently accommodate and process non-cognate amino acids such as alanine and cysteine, to avoid such errors it has two additional distinct editing activities against alanine. One activity is designated as 'pretransfer' editing and involves the tRNA(Pro)-independent hydrolysis of activated Ala-AMP. The other activity is designated 'posttransfer' editing and involves deacylation of mischarged Ala-tRNA(Pro). The misacylated Cys-tRNA(Pro) is not edited by ProRS.</text>
</comment>
<comment type="catalytic activity">
    <reaction evidence="1">
        <text>tRNA(Pro) + L-proline + ATP = L-prolyl-tRNA(Pro) + AMP + diphosphate</text>
        <dbReference type="Rhea" id="RHEA:14305"/>
        <dbReference type="Rhea" id="RHEA-COMP:9700"/>
        <dbReference type="Rhea" id="RHEA-COMP:9702"/>
        <dbReference type="ChEBI" id="CHEBI:30616"/>
        <dbReference type="ChEBI" id="CHEBI:33019"/>
        <dbReference type="ChEBI" id="CHEBI:60039"/>
        <dbReference type="ChEBI" id="CHEBI:78442"/>
        <dbReference type="ChEBI" id="CHEBI:78532"/>
        <dbReference type="ChEBI" id="CHEBI:456215"/>
        <dbReference type="EC" id="6.1.1.15"/>
    </reaction>
</comment>
<comment type="subunit">
    <text evidence="1">Homodimer.</text>
</comment>
<comment type="subcellular location">
    <subcellularLocation>
        <location evidence="1">Cytoplasm</location>
    </subcellularLocation>
</comment>
<comment type="domain">
    <text evidence="1">Consists of three domains: the N-terminal catalytic domain, the editing domain and the C-terminal anticodon-binding domain.</text>
</comment>
<comment type="similarity">
    <text evidence="1">Belongs to the class-II aminoacyl-tRNA synthetase family. ProS type 1 subfamily.</text>
</comment>
<proteinExistence type="inferred from homology"/>
<organism>
    <name type="scientific">Bacillus licheniformis (strain ATCC 14580 / DSM 13 / JCM 2505 / CCUG 7422 / NBRC 12200 / NCIMB 9375 / NCTC 10341 / NRRL NRS-1264 / Gibson 46)</name>
    <dbReference type="NCBI Taxonomy" id="279010"/>
    <lineage>
        <taxon>Bacteria</taxon>
        <taxon>Bacillati</taxon>
        <taxon>Bacillota</taxon>
        <taxon>Bacilli</taxon>
        <taxon>Bacillales</taxon>
        <taxon>Bacillaceae</taxon>
        <taxon>Bacillus</taxon>
    </lineage>
</organism>
<dbReference type="EC" id="6.1.1.15" evidence="1"/>
<dbReference type="EMBL" id="AE017333">
    <property type="protein sequence ID" value="AAU40773.1"/>
    <property type="molecule type" value="Genomic_DNA"/>
</dbReference>
<dbReference type="EMBL" id="CP000002">
    <property type="protein sequence ID" value="AAU23413.1"/>
    <property type="molecule type" value="Genomic_DNA"/>
</dbReference>
<dbReference type="RefSeq" id="WP_003181850.1">
    <property type="nucleotide sequence ID" value="NC_006322.1"/>
</dbReference>
<dbReference type="SMR" id="Q65JJ1"/>
<dbReference type="STRING" id="279010.BL01235"/>
<dbReference type="KEGG" id="bld:BLi01878"/>
<dbReference type="KEGG" id="bli:BL01235"/>
<dbReference type="eggNOG" id="COG0442">
    <property type="taxonomic scope" value="Bacteria"/>
</dbReference>
<dbReference type="HOGENOM" id="CLU_016739_0_0_9"/>
<dbReference type="Proteomes" id="UP000000606">
    <property type="component" value="Chromosome"/>
</dbReference>
<dbReference type="GO" id="GO:0005829">
    <property type="term" value="C:cytosol"/>
    <property type="evidence" value="ECO:0007669"/>
    <property type="project" value="TreeGrafter"/>
</dbReference>
<dbReference type="GO" id="GO:0002161">
    <property type="term" value="F:aminoacyl-tRNA deacylase activity"/>
    <property type="evidence" value="ECO:0007669"/>
    <property type="project" value="InterPro"/>
</dbReference>
<dbReference type="GO" id="GO:0005524">
    <property type="term" value="F:ATP binding"/>
    <property type="evidence" value="ECO:0007669"/>
    <property type="project" value="UniProtKB-UniRule"/>
</dbReference>
<dbReference type="GO" id="GO:0140096">
    <property type="term" value="F:catalytic activity, acting on a protein"/>
    <property type="evidence" value="ECO:0007669"/>
    <property type="project" value="UniProtKB-ARBA"/>
</dbReference>
<dbReference type="GO" id="GO:0004827">
    <property type="term" value="F:proline-tRNA ligase activity"/>
    <property type="evidence" value="ECO:0007669"/>
    <property type="project" value="UniProtKB-UniRule"/>
</dbReference>
<dbReference type="GO" id="GO:0016740">
    <property type="term" value="F:transferase activity"/>
    <property type="evidence" value="ECO:0007669"/>
    <property type="project" value="UniProtKB-ARBA"/>
</dbReference>
<dbReference type="GO" id="GO:0006433">
    <property type="term" value="P:prolyl-tRNA aminoacylation"/>
    <property type="evidence" value="ECO:0007669"/>
    <property type="project" value="UniProtKB-UniRule"/>
</dbReference>
<dbReference type="CDD" id="cd04334">
    <property type="entry name" value="ProRS-INS"/>
    <property type="match status" value="1"/>
</dbReference>
<dbReference type="CDD" id="cd00861">
    <property type="entry name" value="ProRS_anticodon_short"/>
    <property type="match status" value="1"/>
</dbReference>
<dbReference type="CDD" id="cd00779">
    <property type="entry name" value="ProRS_core_prok"/>
    <property type="match status" value="1"/>
</dbReference>
<dbReference type="FunFam" id="3.30.930.10:FF:000015">
    <property type="entry name" value="Proline--tRNA ligase"/>
    <property type="match status" value="1"/>
</dbReference>
<dbReference type="FunFam" id="3.30.930.10:FF:000043">
    <property type="entry name" value="Proline--tRNA ligase"/>
    <property type="match status" value="1"/>
</dbReference>
<dbReference type="FunFam" id="3.40.50.800:FF:000011">
    <property type="entry name" value="Proline--tRNA ligase"/>
    <property type="match status" value="1"/>
</dbReference>
<dbReference type="Gene3D" id="3.40.50.800">
    <property type="entry name" value="Anticodon-binding domain"/>
    <property type="match status" value="1"/>
</dbReference>
<dbReference type="Gene3D" id="3.30.930.10">
    <property type="entry name" value="Bira Bifunctional Protein, Domain 2"/>
    <property type="match status" value="2"/>
</dbReference>
<dbReference type="HAMAP" id="MF_01569">
    <property type="entry name" value="Pro_tRNA_synth_type1"/>
    <property type="match status" value="1"/>
</dbReference>
<dbReference type="InterPro" id="IPR002314">
    <property type="entry name" value="aa-tRNA-synt_IIb"/>
</dbReference>
<dbReference type="InterPro" id="IPR006195">
    <property type="entry name" value="aa-tRNA-synth_II"/>
</dbReference>
<dbReference type="InterPro" id="IPR045864">
    <property type="entry name" value="aa-tRNA-synth_II/BPL/LPL"/>
</dbReference>
<dbReference type="InterPro" id="IPR004154">
    <property type="entry name" value="Anticodon-bd"/>
</dbReference>
<dbReference type="InterPro" id="IPR036621">
    <property type="entry name" value="Anticodon-bd_dom_sf"/>
</dbReference>
<dbReference type="InterPro" id="IPR002316">
    <property type="entry name" value="Pro-tRNA-ligase_IIa"/>
</dbReference>
<dbReference type="InterPro" id="IPR004500">
    <property type="entry name" value="Pro-tRNA-synth_IIa_bac-type"/>
</dbReference>
<dbReference type="InterPro" id="IPR023717">
    <property type="entry name" value="Pro-tRNA-Synthase_IIa_type1"/>
</dbReference>
<dbReference type="InterPro" id="IPR050062">
    <property type="entry name" value="Pro-tRNA_synthetase"/>
</dbReference>
<dbReference type="InterPro" id="IPR044140">
    <property type="entry name" value="ProRS_anticodon_short"/>
</dbReference>
<dbReference type="InterPro" id="IPR033730">
    <property type="entry name" value="ProRS_core_prok"/>
</dbReference>
<dbReference type="InterPro" id="IPR036754">
    <property type="entry name" value="YbaK/aa-tRNA-synt-asso_dom_sf"/>
</dbReference>
<dbReference type="InterPro" id="IPR007214">
    <property type="entry name" value="YbaK/aa-tRNA-synth-assoc-dom"/>
</dbReference>
<dbReference type="NCBIfam" id="NF006625">
    <property type="entry name" value="PRK09194.1"/>
    <property type="match status" value="1"/>
</dbReference>
<dbReference type="NCBIfam" id="TIGR00409">
    <property type="entry name" value="proS_fam_II"/>
    <property type="match status" value="1"/>
</dbReference>
<dbReference type="PANTHER" id="PTHR42753">
    <property type="entry name" value="MITOCHONDRIAL RIBOSOME PROTEIN L39/PROLYL-TRNA LIGASE FAMILY MEMBER"/>
    <property type="match status" value="1"/>
</dbReference>
<dbReference type="PANTHER" id="PTHR42753:SF2">
    <property type="entry name" value="PROLINE--TRNA LIGASE"/>
    <property type="match status" value="1"/>
</dbReference>
<dbReference type="Pfam" id="PF03129">
    <property type="entry name" value="HGTP_anticodon"/>
    <property type="match status" value="1"/>
</dbReference>
<dbReference type="Pfam" id="PF00587">
    <property type="entry name" value="tRNA-synt_2b"/>
    <property type="match status" value="1"/>
</dbReference>
<dbReference type="Pfam" id="PF04073">
    <property type="entry name" value="tRNA_edit"/>
    <property type="match status" value="1"/>
</dbReference>
<dbReference type="PIRSF" id="PIRSF001535">
    <property type="entry name" value="ProRS_1"/>
    <property type="match status" value="1"/>
</dbReference>
<dbReference type="PRINTS" id="PR01046">
    <property type="entry name" value="TRNASYNTHPRO"/>
</dbReference>
<dbReference type="SUPFAM" id="SSF52954">
    <property type="entry name" value="Class II aaRS ABD-related"/>
    <property type="match status" value="1"/>
</dbReference>
<dbReference type="SUPFAM" id="SSF55681">
    <property type="entry name" value="Class II aaRS and biotin synthetases"/>
    <property type="match status" value="1"/>
</dbReference>
<dbReference type="SUPFAM" id="SSF55826">
    <property type="entry name" value="YbaK/ProRS associated domain"/>
    <property type="match status" value="1"/>
</dbReference>
<dbReference type="PROSITE" id="PS50862">
    <property type="entry name" value="AA_TRNA_LIGASE_II"/>
    <property type="match status" value="1"/>
</dbReference>
<name>SYP_BACLD</name>